<proteinExistence type="inferred from homology"/>
<comment type="function">
    <text evidence="1">Produces ATP from ADP in the presence of a proton gradient across the membrane. The catalytic sites are hosted primarily by the beta subunits.</text>
</comment>
<comment type="catalytic activity">
    <reaction evidence="1">
        <text>ATP + H2O + 4 H(+)(in) = ADP + phosphate + 5 H(+)(out)</text>
        <dbReference type="Rhea" id="RHEA:57720"/>
        <dbReference type="ChEBI" id="CHEBI:15377"/>
        <dbReference type="ChEBI" id="CHEBI:15378"/>
        <dbReference type="ChEBI" id="CHEBI:30616"/>
        <dbReference type="ChEBI" id="CHEBI:43474"/>
        <dbReference type="ChEBI" id="CHEBI:456216"/>
        <dbReference type="EC" id="7.1.2.2"/>
    </reaction>
</comment>
<comment type="subunit">
    <text evidence="1">F-type ATPases have 2 components, CF(1) - the catalytic core - and CF(0) - the membrane proton channel. CF(1) has five subunits: alpha(3), beta(3), gamma(1), delta(1), epsilon(1). CF(0) has three main subunits: a(1), b(2) and c(9-12). The alpha and beta chains form an alternating ring which encloses part of the gamma chain. CF(1) is attached to CF(0) by a central stalk formed by the gamma and epsilon chains, while a peripheral stalk is formed by the delta and b chains.</text>
</comment>
<comment type="subcellular location">
    <subcellularLocation>
        <location evidence="1">Cell membrane</location>
        <topology evidence="1">Peripheral membrane protein</topology>
    </subcellularLocation>
</comment>
<comment type="similarity">
    <text evidence="1">Belongs to the ATPase alpha/beta chains family.</text>
</comment>
<sequence length="468" mass="50944">MSSGKIAQVVGPVVDVVFASGDKLPEINNALIVYKNGDKSQKVVLEVALELGDGLVRTIAMESTDGLTRGLEVLDTGRAISVPVGKDTLGRVFNVLGDAIDLEEPFAEDAERQPIHKKAPSFDELSTSSEILETGIKVIDLLAPYLKGGKVGLFGGAGVGKTVLIQELIHNIAQEHGGISVFTGVGERTREGNDLYWEMKESGVIEKTAMVFGQMNEPPGARMRVALTGLTIAEYFRDVEGQDVLLFIDNIFRFTQAGSEVSALLGRMPSAVGYQPTLATEMGQLQERITSTKKGSVTSIQAIYVPADDYTDPAPATAFAHLDSTTNLERKLTQMGIYPAVDPLASSSRALTPEIVGDEHYEVATEVQRVLQRYRELQDIIAILGMDELSDEEKTLVGRARRIQFFLSQNFNVAETFTGQPGSYVPVEETVRGFKEILDGKHDQIPEDAFRMVGGIEDVIAKAEKMNY</sequence>
<gene>
    <name evidence="1" type="primary">atpD</name>
    <name type="ordered locus">SAG0863</name>
</gene>
<protein>
    <recommendedName>
        <fullName evidence="1">ATP synthase subunit beta</fullName>
        <ecNumber evidence="1">7.1.2.2</ecNumber>
    </recommendedName>
    <alternativeName>
        <fullName evidence="1">ATP synthase F1 sector subunit beta</fullName>
    </alternativeName>
    <alternativeName>
        <fullName evidence="1">F-ATPase subunit beta</fullName>
    </alternativeName>
</protein>
<feature type="chain" id="PRO_0000254388" description="ATP synthase subunit beta">
    <location>
        <begin position="1"/>
        <end position="468"/>
    </location>
</feature>
<feature type="binding site" evidence="1">
    <location>
        <begin position="155"/>
        <end position="162"/>
    </location>
    <ligand>
        <name>ATP</name>
        <dbReference type="ChEBI" id="CHEBI:30616"/>
    </ligand>
</feature>
<accession>Q8E072</accession>
<name>ATPB_STRA5</name>
<reference key="1">
    <citation type="journal article" date="2002" name="Proc. Natl. Acad. Sci. U.S.A.">
        <title>Complete genome sequence and comparative genomic analysis of an emerging human pathogen, serotype V Streptococcus agalactiae.</title>
        <authorList>
            <person name="Tettelin H."/>
            <person name="Masignani V."/>
            <person name="Cieslewicz M.J."/>
            <person name="Eisen J.A."/>
            <person name="Peterson S.N."/>
            <person name="Wessels M.R."/>
            <person name="Paulsen I.T."/>
            <person name="Nelson K.E."/>
            <person name="Margarit I."/>
            <person name="Read T.D."/>
            <person name="Madoff L.C."/>
            <person name="Wolf A.M."/>
            <person name="Beanan M.J."/>
            <person name="Brinkac L.M."/>
            <person name="Daugherty S.C."/>
            <person name="DeBoy R.T."/>
            <person name="Durkin A.S."/>
            <person name="Kolonay J.F."/>
            <person name="Madupu R."/>
            <person name="Lewis M.R."/>
            <person name="Radune D."/>
            <person name="Fedorova N.B."/>
            <person name="Scanlan D."/>
            <person name="Khouri H.M."/>
            <person name="Mulligan S."/>
            <person name="Carty H.A."/>
            <person name="Cline R.T."/>
            <person name="Van Aken S.E."/>
            <person name="Gill J."/>
            <person name="Scarselli M."/>
            <person name="Mora M."/>
            <person name="Iacobini E.T."/>
            <person name="Brettoni C."/>
            <person name="Galli G."/>
            <person name="Mariani M."/>
            <person name="Vegni F."/>
            <person name="Maione D."/>
            <person name="Rinaudo D."/>
            <person name="Rappuoli R."/>
            <person name="Telford J.L."/>
            <person name="Kasper D.L."/>
            <person name="Grandi G."/>
            <person name="Fraser C.M."/>
        </authorList>
    </citation>
    <scope>NUCLEOTIDE SEQUENCE [LARGE SCALE GENOMIC DNA]</scope>
    <source>
        <strain>ATCC BAA-611 / 2603 V/R</strain>
    </source>
</reference>
<dbReference type="EC" id="7.1.2.2" evidence="1"/>
<dbReference type="EMBL" id="AE009948">
    <property type="protein sequence ID" value="AAM99749.1"/>
    <property type="molecule type" value="Genomic_DNA"/>
</dbReference>
<dbReference type="RefSeq" id="NP_687877.1">
    <property type="nucleotide sequence ID" value="NC_004116.1"/>
</dbReference>
<dbReference type="RefSeq" id="WP_000094375.1">
    <property type="nucleotide sequence ID" value="NC_004116.1"/>
</dbReference>
<dbReference type="SMR" id="Q8E072"/>
<dbReference type="STRING" id="208435.SAG0863"/>
<dbReference type="GeneID" id="66885813"/>
<dbReference type="KEGG" id="sag:SAG0863"/>
<dbReference type="PATRIC" id="fig|208435.3.peg.870"/>
<dbReference type="HOGENOM" id="CLU_022398_0_2_9"/>
<dbReference type="OrthoDB" id="9801639at2"/>
<dbReference type="Proteomes" id="UP000000821">
    <property type="component" value="Chromosome"/>
</dbReference>
<dbReference type="GO" id="GO:0005886">
    <property type="term" value="C:plasma membrane"/>
    <property type="evidence" value="ECO:0007669"/>
    <property type="project" value="UniProtKB-SubCell"/>
</dbReference>
<dbReference type="GO" id="GO:0045259">
    <property type="term" value="C:proton-transporting ATP synthase complex"/>
    <property type="evidence" value="ECO:0007669"/>
    <property type="project" value="UniProtKB-KW"/>
</dbReference>
<dbReference type="GO" id="GO:0005524">
    <property type="term" value="F:ATP binding"/>
    <property type="evidence" value="ECO:0007669"/>
    <property type="project" value="UniProtKB-UniRule"/>
</dbReference>
<dbReference type="GO" id="GO:0016887">
    <property type="term" value="F:ATP hydrolysis activity"/>
    <property type="evidence" value="ECO:0007669"/>
    <property type="project" value="InterPro"/>
</dbReference>
<dbReference type="GO" id="GO:0046933">
    <property type="term" value="F:proton-transporting ATP synthase activity, rotational mechanism"/>
    <property type="evidence" value="ECO:0007669"/>
    <property type="project" value="UniProtKB-UniRule"/>
</dbReference>
<dbReference type="CDD" id="cd18110">
    <property type="entry name" value="ATP-synt_F1_beta_C"/>
    <property type="match status" value="1"/>
</dbReference>
<dbReference type="CDD" id="cd18115">
    <property type="entry name" value="ATP-synt_F1_beta_N"/>
    <property type="match status" value="1"/>
</dbReference>
<dbReference type="CDD" id="cd01133">
    <property type="entry name" value="F1-ATPase_beta_CD"/>
    <property type="match status" value="1"/>
</dbReference>
<dbReference type="FunFam" id="1.10.1140.10:FF:000001">
    <property type="entry name" value="ATP synthase subunit beta"/>
    <property type="match status" value="1"/>
</dbReference>
<dbReference type="FunFam" id="2.40.10.170:FF:000005">
    <property type="entry name" value="ATP synthase subunit beta"/>
    <property type="match status" value="1"/>
</dbReference>
<dbReference type="FunFam" id="3.40.50.300:FF:000004">
    <property type="entry name" value="ATP synthase subunit beta"/>
    <property type="match status" value="1"/>
</dbReference>
<dbReference type="Gene3D" id="2.40.10.170">
    <property type="match status" value="1"/>
</dbReference>
<dbReference type="Gene3D" id="1.10.1140.10">
    <property type="entry name" value="Bovine Mitochondrial F1-atpase, Atp Synthase Beta Chain, Chain D, domain 3"/>
    <property type="match status" value="1"/>
</dbReference>
<dbReference type="Gene3D" id="3.40.50.300">
    <property type="entry name" value="P-loop containing nucleotide triphosphate hydrolases"/>
    <property type="match status" value="1"/>
</dbReference>
<dbReference type="HAMAP" id="MF_01347">
    <property type="entry name" value="ATP_synth_beta_bact"/>
    <property type="match status" value="1"/>
</dbReference>
<dbReference type="InterPro" id="IPR003593">
    <property type="entry name" value="AAA+_ATPase"/>
</dbReference>
<dbReference type="InterPro" id="IPR055190">
    <property type="entry name" value="ATP-synt_VA_C"/>
</dbReference>
<dbReference type="InterPro" id="IPR005722">
    <property type="entry name" value="ATP_synth_F1_bsu"/>
</dbReference>
<dbReference type="InterPro" id="IPR020003">
    <property type="entry name" value="ATPase_a/bsu_AS"/>
</dbReference>
<dbReference type="InterPro" id="IPR050053">
    <property type="entry name" value="ATPase_alpha/beta_chains"/>
</dbReference>
<dbReference type="InterPro" id="IPR004100">
    <property type="entry name" value="ATPase_F1/V1/A1_a/bsu_N"/>
</dbReference>
<dbReference type="InterPro" id="IPR036121">
    <property type="entry name" value="ATPase_F1/V1/A1_a/bsu_N_sf"/>
</dbReference>
<dbReference type="InterPro" id="IPR000194">
    <property type="entry name" value="ATPase_F1/V1/A1_a/bsu_nucl-bd"/>
</dbReference>
<dbReference type="InterPro" id="IPR024034">
    <property type="entry name" value="ATPase_F1/V1_b/a_C"/>
</dbReference>
<dbReference type="InterPro" id="IPR027417">
    <property type="entry name" value="P-loop_NTPase"/>
</dbReference>
<dbReference type="NCBIfam" id="TIGR01039">
    <property type="entry name" value="atpD"/>
    <property type="match status" value="1"/>
</dbReference>
<dbReference type="PANTHER" id="PTHR15184">
    <property type="entry name" value="ATP SYNTHASE"/>
    <property type="match status" value="1"/>
</dbReference>
<dbReference type="PANTHER" id="PTHR15184:SF71">
    <property type="entry name" value="ATP SYNTHASE SUBUNIT BETA, MITOCHONDRIAL"/>
    <property type="match status" value="1"/>
</dbReference>
<dbReference type="Pfam" id="PF00006">
    <property type="entry name" value="ATP-synt_ab"/>
    <property type="match status" value="1"/>
</dbReference>
<dbReference type="Pfam" id="PF02874">
    <property type="entry name" value="ATP-synt_ab_N"/>
    <property type="match status" value="1"/>
</dbReference>
<dbReference type="Pfam" id="PF22919">
    <property type="entry name" value="ATP-synt_VA_C"/>
    <property type="match status" value="1"/>
</dbReference>
<dbReference type="SMART" id="SM00382">
    <property type="entry name" value="AAA"/>
    <property type="match status" value="1"/>
</dbReference>
<dbReference type="SUPFAM" id="SSF47917">
    <property type="entry name" value="C-terminal domain of alpha and beta subunits of F1 ATP synthase"/>
    <property type="match status" value="1"/>
</dbReference>
<dbReference type="SUPFAM" id="SSF50615">
    <property type="entry name" value="N-terminal domain of alpha and beta subunits of F1 ATP synthase"/>
    <property type="match status" value="1"/>
</dbReference>
<dbReference type="SUPFAM" id="SSF52540">
    <property type="entry name" value="P-loop containing nucleoside triphosphate hydrolases"/>
    <property type="match status" value="1"/>
</dbReference>
<dbReference type="PROSITE" id="PS00152">
    <property type="entry name" value="ATPASE_ALPHA_BETA"/>
    <property type="match status" value="1"/>
</dbReference>
<evidence type="ECO:0000255" key="1">
    <source>
        <dbReference type="HAMAP-Rule" id="MF_01347"/>
    </source>
</evidence>
<organism>
    <name type="scientific">Streptococcus agalactiae serotype V (strain ATCC BAA-611 / 2603 V/R)</name>
    <dbReference type="NCBI Taxonomy" id="208435"/>
    <lineage>
        <taxon>Bacteria</taxon>
        <taxon>Bacillati</taxon>
        <taxon>Bacillota</taxon>
        <taxon>Bacilli</taxon>
        <taxon>Lactobacillales</taxon>
        <taxon>Streptococcaceae</taxon>
        <taxon>Streptococcus</taxon>
    </lineage>
</organism>
<keyword id="KW-0066">ATP synthesis</keyword>
<keyword id="KW-0067">ATP-binding</keyword>
<keyword id="KW-1003">Cell membrane</keyword>
<keyword id="KW-0139">CF(1)</keyword>
<keyword id="KW-0375">Hydrogen ion transport</keyword>
<keyword id="KW-0406">Ion transport</keyword>
<keyword id="KW-0472">Membrane</keyword>
<keyword id="KW-0547">Nucleotide-binding</keyword>
<keyword id="KW-1185">Reference proteome</keyword>
<keyword id="KW-1278">Translocase</keyword>
<keyword id="KW-0813">Transport</keyword>